<protein>
    <recommendedName>
        <fullName evidence="6">Gliotoxin thiomethyltransferase GtmA</fullName>
        <ecNumber evidence="1 2">2.1.1.9</ecNumber>
    </recommendedName>
    <alternativeName>
        <fullName evidence="5">Thiol methyltransferase tmtA</fullName>
        <shortName>S-MT tmtA</shortName>
    </alternativeName>
</protein>
<reference key="1">
    <citation type="journal article" date="2005" name="Nature">
        <title>Genomic sequence of the pathogenic and allergenic filamentous fungus Aspergillus fumigatus.</title>
        <authorList>
            <person name="Nierman W.C."/>
            <person name="Pain A."/>
            <person name="Anderson M.J."/>
            <person name="Wortman J.R."/>
            <person name="Kim H.S."/>
            <person name="Arroyo J."/>
            <person name="Berriman M."/>
            <person name="Abe K."/>
            <person name="Archer D.B."/>
            <person name="Bermejo C."/>
            <person name="Bennett J.W."/>
            <person name="Bowyer P."/>
            <person name="Chen D."/>
            <person name="Collins M."/>
            <person name="Coulsen R."/>
            <person name="Davies R."/>
            <person name="Dyer P.S."/>
            <person name="Farman M.L."/>
            <person name="Fedorova N."/>
            <person name="Fedorova N.D."/>
            <person name="Feldblyum T.V."/>
            <person name="Fischer R."/>
            <person name="Fosker N."/>
            <person name="Fraser A."/>
            <person name="Garcia J.L."/>
            <person name="Garcia M.J."/>
            <person name="Goble A."/>
            <person name="Goldman G.H."/>
            <person name="Gomi K."/>
            <person name="Griffith-Jones S."/>
            <person name="Gwilliam R."/>
            <person name="Haas B.J."/>
            <person name="Haas H."/>
            <person name="Harris D.E."/>
            <person name="Horiuchi H."/>
            <person name="Huang J."/>
            <person name="Humphray S."/>
            <person name="Jimenez J."/>
            <person name="Keller N."/>
            <person name="Khouri H."/>
            <person name="Kitamoto K."/>
            <person name="Kobayashi T."/>
            <person name="Konzack S."/>
            <person name="Kulkarni R."/>
            <person name="Kumagai T."/>
            <person name="Lafton A."/>
            <person name="Latge J.-P."/>
            <person name="Li W."/>
            <person name="Lord A."/>
            <person name="Lu C."/>
            <person name="Majoros W.H."/>
            <person name="May G.S."/>
            <person name="Miller B.L."/>
            <person name="Mohamoud Y."/>
            <person name="Molina M."/>
            <person name="Monod M."/>
            <person name="Mouyna I."/>
            <person name="Mulligan S."/>
            <person name="Murphy L.D."/>
            <person name="O'Neil S."/>
            <person name="Paulsen I."/>
            <person name="Penalva M.A."/>
            <person name="Pertea M."/>
            <person name="Price C."/>
            <person name="Pritchard B.L."/>
            <person name="Quail M.A."/>
            <person name="Rabbinowitsch E."/>
            <person name="Rawlins N."/>
            <person name="Rajandream M.A."/>
            <person name="Reichard U."/>
            <person name="Renauld H."/>
            <person name="Robson G.D."/>
            <person name="Rodriguez de Cordoba S."/>
            <person name="Rodriguez-Pena J.M."/>
            <person name="Ronning C.M."/>
            <person name="Rutter S."/>
            <person name="Salzberg S.L."/>
            <person name="Sanchez M."/>
            <person name="Sanchez-Ferrero J.C."/>
            <person name="Saunders D."/>
            <person name="Seeger K."/>
            <person name="Squares R."/>
            <person name="Squares S."/>
            <person name="Takeuchi M."/>
            <person name="Tekaia F."/>
            <person name="Turner G."/>
            <person name="Vazquez de Aldana C.R."/>
            <person name="Weidman J."/>
            <person name="White O."/>
            <person name="Woodward J.R."/>
            <person name="Yu J.-H."/>
            <person name="Fraser C.M."/>
            <person name="Galagan J.E."/>
            <person name="Asai K."/>
            <person name="Machida M."/>
            <person name="Hall N."/>
            <person name="Barrell B.G."/>
            <person name="Denning D.W."/>
        </authorList>
    </citation>
    <scope>NUCLEOTIDE SEQUENCE [LARGE SCALE GENOMIC DNA]</scope>
    <source>
        <strain>ATCC MYA-4609 / CBS 101355 / FGSC A1100 / Af293</strain>
    </source>
</reference>
<reference key="2">
    <citation type="journal article" date="2014" name="Chem. Biol.">
        <title>Regulation of nonribosomal peptide synthesis: bis-thiomethylation attenuates gliotoxin biosynthesis in Aspergillus fumigatus.</title>
        <authorList>
            <person name="Dolan S.K."/>
            <person name="Owens R.A."/>
            <person name="O'Keeffe G."/>
            <person name="Hammel S."/>
            <person name="Fitzpatrick D.A."/>
            <person name="Jones G.W."/>
            <person name="Doyle S."/>
        </authorList>
    </citation>
    <scope>FUNCTION</scope>
    <scope>CATALYTIC ACTIVITY</scope>
    <scope>IDENTIFICATION BY MASS SPECTROMETRY</scope>
    <scope>INDUCTION BY GLIOTOXIN</scope>
</reference>
<reference key="3">
    <citation type="journal article" date="2014" name="J. Am. Chem. Soc.">
        <title>Opposed effects of enzymatic gliotoxin N- and S-methylations.</title>
        <authorList>
            <person name="Scharf D.H."/>
            <person name="Habel A."/>
            <person name="Heinekamp T."/>
            <person name="Brakhage A.A."/>
            <person name="Hertweck C."/>
        </authorList>
    </citation>
    <scope>FUNCTION</scope>
    <scope>CATALYTIC ACTIVITY</scope>
    <scope>BIOPHYSICOCHEMICAL PROPERTIES</scope>
</reference>
<reference evidence="9" key="4">
    <citation type="journal article" date="2016" name="ACS Chem. Biol.">
        <title>Sequential inactivation of gliotoxin by the S-methyltransferase TmtA.</title>
        <authorList>
            <person name="Duell E.R."/>
            <person name="Glaser M."/>
            <person name="Le Chapelain C."/>
            <person name="Antes I."/>
            <person name="Groll M."/>
            <person name="Huber E.M."/>
        </authorList>
    </citation>
    <scope>X-RAY CRYSTALLOGRAPHY (1.50 ANGSTROMS) IN COMPLEX WITH S-ADENOSYL-L-HOMOCYSTEINE</scope>
    <scope>MUTAGENESIS OF TYR-20 AND TRP-162</scope>
</reference>
<reference evidence="10 11" key="5">
    <citation type="journal article" date="2017" name="Open Biol.">
        <title>Structural, mechanistic and functional insight into gliotoxin bis-thiomethylation in Aspergillus fumigatus.</title>
        <authorList>
            <person name="Dolan S.K."/>
            <person name="Bock T."/>
            <person name="Hering V."/>
            <person name="Owens R.A."/>
            <person name="Jones G.W."/>
            <person name="Blankenfeldt W."/>
            <person name="Doyle S."/>
        </authorList>
    </citation>
    <scope>X-RAY CRYSTALLOGRAPHY (1.33 ANGSTROMS) IN COMPLEX WITH S-ADENOSYL-L-METHIONINE</scope>
    <scope>DISULFIDE BONDS</scope>
    <scope>SUBCELLULAR LOCATION</scope>
</reference>
<organism>
    <name type="scientific">Aspergillus fumigatus (strain ATCC MYA-4609 / CBS 101355 / FGSC A1100 / Af293)</name>
    <name type="common">Neosartorya fumigata</name>
    <dbReference type="NCBI Taxonomy" id="330879"/>
    <lineage>
        <taxon>Eukaryota</taxon>
        <taxon>Fungi</taxon>
        <taxon>Dikarya</taxon>
        <taxon>Ascomycota</taxon>
        <taxon>Pezizomycotina</taxon>
        <taxon>Eurotiomycetes</taxon>
        <taxon>Eurotiomycetidae</taxon>
        <taxon>Eurotiales</taxon>
        <taxon>Aspergillaceae</taxon>
        <taxon>Aspergillus</taxon>
        <taxon>Aspergillus subgen. Fumigati</taxon>
    </lineage>
</organism>
<comment type="function">
    <text evidence="1 2">S-methyltransferase that catalyzes the irreversible conversion of the secondary metabolite gliotoxin to bis(methylthio)gliotoxin (BmGT). Gliotoxin, a member of the epipolythiodioxopiperazine (ETP) class of toxins, is characterized by a disulfide bridged cyclic dipeptide. Its thiol groups are essential for bioactivity, as they conjugate to sulfur-containing proteins, disturb the intracellular redox equilibrium, and generate reactive oxygen species by cycling between reduced and oxidized states. The enzyme prevents self-intoxication of the fungus by irreversible conversion of the toxic gliotoxin to a biologically inactive bis-thiomethylated derivative. Appears to negatively regulate gliotoxin biosynthesis.</text>
</comment>
<comment type="catalytic activity">
    <reaction evidence="1 2">
        <text>a thiol + S-adenosyl-L-methionine = a methyl thioether + S-adenosyl-L-homocysteine + H(+)</text>
        <dbReference type="Rhea" id="RHEA:18277"/>
        <dbReference type="ChEBI" id="CHEBI:15378"/>
        <dbReference type="ChEBI" id="CHEBI:29256"/>
        <dbReference type="ChEBI" id="CHEBI:57856"/>
        <dbReference type="ChEBI" id="CHEBI:59789"/>
        <dbReference type="ChEBI" id="CHEBI:86315"/>
        <dbReference type="EC" id="2.1.1.9"/>
    </reaction>
</comment>
<comment type="biophysicochemical properties">
    <kinetics>
        <KM evidence="1">239.8 uM for gliotoxin</KM>
        <Vmax evidence="1">1.2 umol/min/mg enzyme</Vmax>
    </kinetics>
</comment>
<comment type="subcellular location">
    <subcellularLocation>
        <location evidence="4">Cytoplasm</location>
    </subcellularLocation>
</comment>
<comment type="induction">
    <text evidence="2">Induced by exogenous gliotoxin.</text>
</comment>
<comment type="similarity">
    <text evidence="7">Belongs to the class I-like SAM-binding methyltransferase superfamily.</text>
</comment>
<comment type="sequence caution" evidence="7">
    <conflict type="erroneous gene model prediction">
        <sequence resource="EMBL-CDS" id="EAL93407"/>
    </conflict>
</comment>
<dbReference type="EC" id="2.1.1.9" evidence="1 2"/>
<dbReference type="EMBL" id="AAHF01000001">
    <property type="protein sequence ID" value="EAL93407.1"/>
    <property type="status" value="ALT_SEQ"/>
    <property type="molecule type" value="Genomic_DNA"/>
</dbReference>
<dbReference type="RefSeq" id="XP_755445.1">
    <property type="nucleotide sequence ID" value="XM_750352.1"/>
</dbReference>
<dbReference type="PDB" id="5EGP">
    <property type="method" value="X-ray"/>
    <property type="resolution" value="1.50 A"/>
    <property type="chains" value="A/B=1-287"/>
</dbReference>
<dbReference type="PDB" id="5JGJ">
    <property type="method" value="X-ray"/>
    <property type="resolution" value="1.66 A"/>
    <property type="chains" value="A=1-287"/>
</dbReference>
<dbReference type="PDB" id="5JGK">
    <property type="method" value="X-ray"/>
    <property type="resolution" value="1.33 A"/>
    <property type="chains" value="A/B=1-287"/>
</dbReference>
<dbReference type="PDB" id="5JGL">
    <property type="method" value="X-ray"/>
    <property type="resolution" value="2.28 A"/>
    <property type="chains" value="A/B=1-287"/>
</dbReference>
<dbReference type="PDBsum" id="5EGP"/>
<dbReference type="PDBsum" id="5JGJ"/>
<dbReference type="PDBsum" id="5JGK"/>
<dbReference type="PDBsum" id="5JGL"/>
<dbReference type="SMR" id="Q4X158"/>
<dbReference type="EnsemblFungi" id="EAL93407">
    <property type="protein sequence ID" value="EAL93407"/>
    <property type="gene ID" value="AFUA_2G11120"/>
</dbReference>
<dbReference type="GeneID" id="3513381"/>
<dbReference type="KEGG" id="afm:AFUA_2G11120"/>
<dbReference type="eggNOG" id="ENOG502S4V1">
    <property type="taxonomic scope" value="Eukaryota"/>
</dbReference>
<dbReference type="HOGENOM" id="CLU_065416_0_0_1"/>
<dbReference type="InParanoid" id="Q4X158"/>
<dbReference type="OrthoDB" id="2013972at2759"/>
<dbReference type="BioCyc" id="MetaCyc:MONOMER-18857"/>
<dbReference type="Proteomes" id="UP000002530">
    <property type="component" value="Chromosome 2"/>
</dbReference>
<dbReference type="GO" id="GO:0005737">
    <property type="term" value="C:cytoplasm"/>
    <property type="evidence" value="ECO:0007669"/>
    <property type="project" value="UniProtKB-SubCell"/>
</dbReference>
<dbReference type="GO" id="GO:0008168">
    <property type="term" value="F:methyltransferase activity"/>
    <property type="evidence" value="ECO:0007669"/>
    <property type="project" value="UniProtKB-KW"/>
</dbReference>
<dbReference type="GO" id="GO:0032259">
    <property type="term" value="P:methylation"/>
    <property type="evidence" value="ECO:0007669"/>
    <property type="project" value="UniProtKB-KW"/>
</dbReference>
<dbReference type="CDD" id="cd02440">
    <property type="entry name" value="AdoMet_MTases"/>
    <property type="match status" value="1"/>
</dbReference>
<dbReference type="Gene3D" id="3.40.50.150">
    <property type="entry name" value="Vaccinia Virus protein VP39"/>
    <property type="match status" value="1"/>
</dbReference>
<dbReference type="InterPro" id="IPR029063">
    <property type="entry name" value="SAM-dependent_MTases_sf"/>
</dbReference>
<dbReference type="PANTHER" id="PTHR43591">
    <property type="entry name" value="METHYLTRANSFERASE"/>
    <property type="match status" value="1"/>
</dbReference>
<dbReference type="Pfam" id="PF01209">
    <property type="entry name" value="Ubie_methyltran"/>
    <property type="match status" value="1"/>
</dbReference>
<dbReference type="SUPFAM" id="SSF53335">
    <property type="entry name" value="S-adenosyl-L-methionine-dependent methyltransferases"/>
    <property type="match status" value="1"/>
</dbReference>
<sequence length="287" mass="32216">MSKSDYIQNMFQTKSFVDRYKYTEKLTGLYAQTLVDYSGVANTSQKPLVVLDNACGIGAVSSVLNHTLQDEAKKTWKLTCGDLSEGMLETTKRRLQDEGWVNAETKIVNALDTGLPDGHYTHVFVAFGFQSFPDANAALKECFRILASGGILASSTWQNFNWIPIMKAAIETIPGNLPFPTQKEFIALHNAGWDSESYIQSELEKLGFRDVKVIPVPKETSIPIDEFFEVCMMIIPYLLPKFWTEEQRESHEKDVPMVLRQYLQDTYGANGQVPLEAVALITTGLKP</sequence>
<feature type="chain" id="PRO_0000457824" description="Gliotoxin thiomethyltransferase GtmA">
    <location>
        <begin position="1"/>
        <end position="287"/>
    </location>
</feature>
<feature type="binding site" evidence="8">
    <location>
        <position position="27"/>
    </location>
    <ligand>
        <name>S-adenosyl-L-methionine</name>
        <dbReference type="ChEBI" id="CHEBI:59789"/>
    </ligand>
</feature>
<feature type="binding site" evidence="8">
    <location>
        <position position="54"/>
    </location>
    <ligand>
        <name>S-adenosyl-L-methionine</name>
        <dbReference type="ChEBI" id="CHEBI:59789"/>
    </ligand>
</feature>
<feature type="binding site" evidence="8">
    <location>
        <position position="82"/>
    </location>
    <ligand>
        <name>S-adenosyl-L-methionine</name>
        <dbReference type="ChEBI" id="CHEBI:59789"/>
    </ligand>
</feature>
<feature type="binding site" evidence="8">
    <location>
        <position position="87"/>
    </location>
    <ligand>
        <name>S-adenosyl-L-methionine</name>
        <dbReference type="ChEBI" id="CHEBI:59789"/>
    </ligand>
</feature>
<feature type="binding site" evidence="8">
    <location>
        <position position="109"/>
    </location>
    <ligand>
        <name>S-adenosyl-L-methionine</name>
        <dbReference type="ChEBI" id="CHEBI:59789"/>
    </ligand>
</feature>
<feature type="binding site" evidence="8">
    <location>
        <position position="110"/>
    </location>
    <ligand>
        <name>S-adenosyl-L-methionine</name>
        <dbReference type="ChEBI" id="CHEBI:59789"/>
    </ligand>
</feature>
<feature type="binding site" evidence="8">
    <location>
        <position position="126"/>
    </location>
    <ligand>
        <name>S-adenosyl-L-methionine</name>
        <dbReference type="ChEBI" id="CHEBI:59789"/>
    </ligand>
</feature>
<feature type="binding site" evidence="8">
    <location>
        <position position="248"/>
    </location>
    <ligand>
        <name>S-adenosyl-L-methionine</name>
        <dbReference type="ChEBI" id="CHEBI:59789"/>
    </ligand>
</feature>
<feature type="disulfide bond" evidence="8">
    <location>
        <begin position="55"/>
        <end position="80"/>
    </location>
</feature>
<feature type="mutagenesis site" description="Abolishes catalytic activity." evidence="3">
    <original>Y</original>
    <variation>A</variation>
    <location>
        <position position="20"/>
    </location>
</feature>
<feature type="mutagenesis site" description="Abolishes catalytic activity." evidence="3">
    <original>W</original>
    <variation>A</variation>
    <location>
        <position position="162"/>
    </location>
</feature>
<feature type="helix" evidence="11">
    <location>
        <begin position="10"/>
        <end position="12"/>
    </location>
</feature>
<feature type="helix" evidence="11">
    <location>
        <begin position="14"/>
        <end position="27"/>
    </location>
</feature>
<feature type="helix" evidence="11">
    <location>
        <begin position="28"/>
        <end position="30"/>
    </location>
</feature>
<feature type="helix" evidence="11">
    <location>
        <begin position="31"/>
        <end position="38"/>
    </location>
</feature>
<feature type="turn" evidence="11">
    <location>
        <begin position="39"/>
        <end position="42"/>
    </location>
</feature>
<feature type="strand" evidence="11">
    <location>
        <begin position="49"/>
        <end position="53"/>
    </location>
</feature>
<feature type="turn" evidence="11">
    <location>
        <begin position="56"/>
        <end position="58"/>
    </location>
</feature>
<feature type="helix" evidence="11">
    <location>
        <begin position="59"/>
        <end position="67"/>
    </location>
</feature>
<feature type="helix" evidence="11">
    <location>
        <begin position="70"/>
        <end position="75"/>
    </location>
</feature>
<feature type="strand" evidence="11">
    <location>
        <begin position="77"/>
        <end position="83"/>
    </location>
</feature>
<feature type="helix" evidence="11">
    <location>
        <begin position="85"/>
        <end position="98"/>
    </location>
</feature>
<feature type="strand" evidence="11">
    <location>
        <begin position="101"/>
        <end position="107"/>
    </location>
</feature>
<feature type="strand" evidence="11">
    <location>
        <begin position="120"/>
        <end position="127"/>
    </location>
</feature>
<feature type="turn" evidence="11">
    <location>
        <begin position="129"/>
        <end position="131"/>
    </location>
</feature>
<feature type="helix" evidence="11">
    <location>
        <begin position="135"/>
        <end position="145"/>
    </location>
</feature>
<feature type="strand" evidence="11">
    <location>
        <begin position="146"/>
        <end position="161"/>
    </location>
</feature>
<feature type="helix" evidence="11">
    <location>
        <begin position="162"/>
        <end position="170"/>
    </location>
</feature>
<feature type="helix" evidence="11">
    <location>
        <begin position="182"/>
        <end position="186"/>
    </location>
</feature>
<feature type="turn" evidence="10">
    <location>
        <begin position="191"/>
        <end position="194"/>
    </location>
</feature>
<feature type="helix" evidence="11">
    <location>
        <begin position="196"/>
        <end position="205"/>
    </location>
</feature>
<feature type="strand" evidence="11">
    <location>
        <begin position="209"/>
        <end position="223"/>
    </location>
</feature>
<feature type="helix" evidence="11">
    <location>
        <begin position="224"/>
        <end position="242"/>
    </location>
</feature>
<feature type="helix" evidence="11">
    <location>
        <begin position="245"/>
        <end position="251"/>
    </location>
</feature>
<feature type="helix" evidence="11">
    <location>
        <begin position="252"/>
        <end position="254"/>
    </location>
</feature>
<feature type="helix" evidence="11">
    <location>
        <begin position="255"/>
        <end position="267"/>
    </location>
</feature>
<feature type="turn" evidence="12">
    <location>
        <begin position="268"/>
        <end position="271"/>
    </location>
</feature>
<feature type="strand" evidence="11">
    <location>
        <begin position="272"/>
        <end position="285"/>
    </location>
</feature>
<keyword id="KW-0002">3D-structure</keyword>
<keyword id="KW-0963">Cytoplasm</keyword>
<keyword id="KW-1015">Disulfide bond</keyword>
<keyword id="KW-0489">Methyltransferase</keyword>
<keyword id="KW-1185">Reference proteome</keyword>
<keyword id="KW-0949">S-adenosyl-L-methionine</keyword>
<keyword id="KW-0808">Transferase</keyword>
<accession>Q4X158</accession>
<evidence type="ECO:0000269" key="1">
    <source>
    </source>
</evidence>
<evidence type="ECO:0000269" key="2">
    <source>
    </source>
</evidence>
<evidence type="ECO:0000269" key="3">
    <source>
    </source>
</evidence>
<evidence type="ECO:0000269" key="4">
    <source>
    </source>
</evidence>
<evidence type="ECO:0000303" key="5">
    <source>
    </source>
</evidence>
<evidence type="ECO:0000303" key="6">
    <source>
    </source>
</evidence>
<evidence type="ECO:0000305" key="7"/>
<evidence type="ECO:0007744" key="8">
    <source>
        <dbReference type="PDB" id="5JGJ"/>
    </source>
</evidence>
<evidence type="ECO:0007829" key="9">
    <source>
        <dbReference type="PDB" id="5EGP"/>
    </source>
</evidence>
<evidence type="ECO:0007829" key="10">
    <source>
        <dbReference type="PDB" id="5JGJ"/>
    </source>
</evidence>
<evidence type="ECO:0007829" key="11">
    <source>
        <dbReference type="PDB" id="5JGK"/>
    </source>
</evidence>
<evidence type="ECO:0007829" key="12">
    <source>
        <dbReference type="PDB" id="5JGL"/>
    </source>
</evidence>
<name>TMTA_ASPFU</name>
<gene>
    <name evidence="5" type="primary">tmtA</name>
    <name evidence="6" type="synonym">gtmA</name>
    <name type="ORF">AFUA_2G11120</name>
</gene>
<proteinExistence type="evidence at protein level"/>